<feature type="chain" id="PRO_0000150977" description="Cell division control protein 6">
    <location>
        <begin position="1"/>
        <end position="513"/>
    </location>
</feature>
<feature type="region of interest" description="Interaction with CDC4; required for degradation" evidence="13">
    <location>
        <begin position="1"/>
        <end position="47"/>
    </location>
</feature>
<feature type="short sequence motif" description="Nuclear localization signal" evidence="10">
    <location>
        <begin position="27"/>
        <end position="33"/>
    </location>
</feature>
<feature type="binding site" evidence="1">
    <location>
        <begin position="108"/>
        <end position="115"/>
    </location>
    <ligand>
        <name>ATP</name>
        <dbReference type="ChEBI" id="CHEBI:30616"/>
    </ligand>
</feature>
<feature type="modified residue" description="Phosphothreonine" evidence="16">
    <location>
        <position position="368"/>
    </location>
</feature>
<feature type="mutagenesis site" description="Impairs nuclear localization." evidence="10">
    <original>K</original>
    <variation>R</variation>
    <variation>T</variation>
    <location>
        <position position="29"/>
    </location>
</feature>
<feature type="mutagenesis site" description="Impairs ORC1-binding and leads to defective association with chromatin." evidence="2 14">
    <original>K</original>
    <variation>E</variation>
    <location>
        <position position="114"/>
    </location>
</feature>
<feature type="sequence conflict" description="In Ref. 1; AAA34484." evidence="15" ref="1">
    <original>A</original>
    <variation>G</variation>
    <location>
        <position position="3"/>
    </location>
</feature>
<feature type="sequence conflict" description="In Ref. 1; AAA34484." evidence="15" ref="1">
    <original>M</original>
    <variation>I</variation>
    <location>
        <position position="202"/>
    </location>
</feature>
<feature type="sequence conflict" description="In Ref. 1; AAA34484." evidence="15" ref="1">
    <original>M</original>
    <variation>I</variation>
    <location>
        <position position="225"/>
    </location>
</feature>
<feature type="sequence conflict" description="In Ref. 8; CAA31510." evidence="15" ref="8">
    <original>L</original>
    <variation>P</variation>
    <location>
        <position position="272"/>
    </location>
</feature>
<feature type="sequence conflict" description="In Ref. 1; AAA34484." evidence="15" ref="1">
    <original>L</original>
    <variation>F</variation>
    <location>
        <position position="277"/>
    </location>
</feature>
<feature type="sequence conflict" description="In Ref. 1; AAA34484." evidence="15" ref="1">
    <original>R</original>
    <variation>S</variation>
    <location>
        <position position="339"/>
    </location>
</feature>
<feature type="sequence conflict" description="In Ref. 8; CAA31510." evidence="15" ref="8">
    <original>SK</original>
    <variation>LQN</variation>
    <location>
        <begin position="395"/>
        <end position="396"/>
    </location>
</feature>
<feature type="sequence conflict" description="In Ref. 8; CAA31510." evidence="15" ref="8">
    <original>S</original>
    <variation>L</variation>
    <location>
        <position position="402"/>
    </location>
</feature>
<feature type="sequence conflict" description="In Ref. 8; CAA31510." evidence="15" ref="8">
    <original>L</original>
    <variation>S</variation>
    <location>
        <position position="410"/>
    </location>
</feature>
<feature type="sequence conflict" description="In Ref. 8; CAA31510." evidence="15" ref="8">
    <original>S</original>
    <variation>L</variation>
    <location>
        <position position="436"/>
    </location>
</feature>
<feature type="helix" evidence="17">
    <location>
        <begin position="54"/>
        <end position="61"/>
    </location>
</feature>
<feature type="helix" evidence="17">
    <location>
        <begin position="82"/>
        <end position="98"/>
    </location>
</feature>
<feature type="strand" evidence="17">
    <location>
        <begin position="102"/>
        <end position="107"/>
    </location>
</feature>
<feature type="helix" evidence="17">
    <location>
        <begin position="114"/>
        <end position="125"/>
    </location>
</feature>
<feature type="strand" evidence="17">
    <location>
        <begin position="151"/>
        <end position="154"/>
    </location>
</feature>
<feature type="strand" evidence="17">
    <location>
        <begin position="164"/>
        <end position="172"/>
    </location>
</feature>
<feature type="helix" evidence="17">
    <location>
        <begin position="178"/>
        <end position="180"/>
    </location>
</feature>
<feature type="helix" evidence="17">
    <location>
        <begin position="181"/>
        <end position="187"/>
    </location>
</feature>
<feature type="strand" evidence="19">
    <location>
        <begin position="192"/>
        <end position="194"/>
    </location>
</feature>
<feature type="helix" evidence="17">
    <location>
        <begin position="202"/>
        <end position="208"/>
    </location>
</feature>
<feature type="turn" evidence="19">
    <location>
        <begin position="209"/>
        <end position="211"/>
    </location>
</feature>
<feature type="strand" evidence="17">
    <location>
        <begin position="217"/>
        <end position="224"/>
    </location>
</feature>
<feature type="helix" evidence="17">
    <location>
        <begin position="225"/>
        <end position="228"/>
    </location>
</feature>
<feature type="strand" evidence="17">
    <location>
        <begin position="231"/>
        <end position="233"/>
    </location>
</feature>
<feature type="turn" evidence="17">
    <location>
        <begin position="235"/>
        <end position="239"/>
    </location>
</feature>
<feature type="helix" evidence="17">
    <location>
        <begin position="240"/>
        <end position="248"/>
    </location>
</feature>
<feature type="strand" evidence="17">
    <location>
        <begin position="251"/>
        <end position="253"/>
    </location>
</feature>
<feature type="strand" evidence="17">
    <location>
        <begin position="256"/>
        <end position="261"/>
    </location>
</feature>
<feature type="turn" evidence="20">
    <location>
        <begin position="264"/>
        <end position="266"/>
    </location>
</feature>
<feature type="strand" evidence="17">
    <location>
        <begin position="284"/>
        <end position="287"/>
    </location>
</feature>
<feature type="helix" evidence="17">
    <location>
        <begin position="293"/>
        <end position="303"/>
    </location>
</feature>
<feature type="helix" evidence="17">
    <location>
        <begin position="304"/>
        <end position="306"/>
    </location>
</feature>
<feature type="strand" evidence="17">
    <location>
        <begin position="307"/>
        <end position="309"/>
    </location>
</feature>
<feature type="helix" evidence="17">
    <location>
        <begin position="314"/>
        <end position="325"/>
    </location>
</feature>
<feature type="strand" evidence="17">
    <location>
        <begin position="326"/>
        <end position="328"/>
    </location>
</feature>
<feature type="helix" evidence="17">
    <location>
        <begin position="331"/>
        <end position="348"/>
    </location>
</feature>
<feature type="helix" evidence="17">
    <location>
        <begin position="388"/>
        <end position="396"/>
    </location>
</feature>
<feature type="helix" evidence="17">
    <location>
        <begin position="403"/>
        <end position="408"/>
    </location>
</feature>
<feature type="helix" evidence="17">
    <location>
        <begin position="412"/>
        <end position="428"/>
    </location>
</feature>
<feature type="helix" evidence="17">
    <location>
        <begin position="433"/>
        <end position="445"/>
    </location>
</feature>
<feature type="helix" evidence="17">
    <location>
        <begin position="455"/>
        <end position="468"/>
    </location>
</feature>
<feature type="strand" evidence="17">
    <location>
        <begin position="470"/>
        <end position="477"/>
    </location>
</feature>
<feature type="strand" evidence="17">
    <location>
        <begin position="480"/>
        <end position="482"/>
    </location>
</feature>
<feature type="strand" evidence="17">
    <location>
        <begin position="485"/>
        <end position="491"/>
    </location>
</feature>
<feature type="helix" evidence="17">
    <location>
        <begin position="495"/>
        <end position="503"/>
    </location>
</feature>
<feature type="turn" evidence="18">
    <location>
        <begin position="506"/>
        <end position="508"/>
    </location>
</feature>
<feature type="helix" evidence="18">
    <location>
        <begin position="509"/>
        <end position="511"/>
    </location>
</feature>
<organism>
    <name type="scientific">Saccharomyces cerevisiae (strain ATCC 204508 / S288c)</name>
    <name type="common">Baker's yeast</name>
    <dbReference type="NCBI Taxonomy" id="559292"/>
    <lineage>
        <taxon>Eukaryota</taxon>
        <taxon>Fungi</taxon>
        <taxon>Dikarya</taxon>
        <taxon>Ascomycota</taxon>
        <taxon>Saccharomycotina</taxon>
        <taxon>Saccharomycetes</taxon>
        <taxon>Saccharomycetales</taxon>
        <taxon>Saccharomycetaceae</taxon>
        <taxon>Saccharomyces</taxon>
    </lineage>
</organism>
<proteinExistence type="evidence at protein level"/>
<comment type="function">
    <text evidence="2 5 7 8 9 11 12 13 14">Plays a crucial role in forming the pre-replicative complexes. Interacts with the origin recognition complex (ORC) and MCM2-7 helicase complex leading to the linking of those complexes and loading of the replicative helicase MCM2-7 onto the pre-replicative complexes. Required for the initiation of DNA replication and then actively participates in the suppression of nuclear division.</text>
</comment>
<comment type="subunit">
    <text evidence="2 3 4 6 7 13">Associates with the ORC complex and the MCM2-7 helicase complex. Interacts with CDC4, CDC28, DIA2, ORC1, and TOM1.</text>
</comment>
<comment type="interaction">
    <interactant intactId="EBI-4447">
        <id>P09119</id>
    </interactant>
    <interactant intactId="EBI-4253">
        <id>P00546</id>
        <label>CDC28</label>
    </interactant>
    <organismsDiffer>false</organismsDiffer>
    <experiments>2</experiments>
</comment>
<comment type="interaction">
    <interactant intactId="EBI-4447">
        <id>P09119</id>
    </interactant>
    <interactant intactId="EBI-22980">
        <id>P43603</id>
        <label>LSB3</label>
    </interactant>
    <organismsDiffer>false</organismsDiffer>
    <experiments>2</experiments>
</comment>
<comment type="interaction">
    <interactant intactId="EBI-4447">
        <id>P09119</id>
    </interactant>
    <interactant intactId="EBI-10533">
        <id>P29469</id>
        <label>MCM2</label>
    </interactant>
    <organismsDiffer>false</organismsDiffer>
    <experiments>4</experiments>
</comment>
<comment type="subcellular location">
    <subcellularLocation>
        <location>Nucleus</location>
    </subcellularLocation>
    <subcellularLocation>
        <location>Chromosome</location>
    </subcellularLocation>
</comment>
<comment type="induction">
    <text evidence="8 9">Transcribed at the end of mitosis, but in cells with a prolonged G1 phase there is a second burst of transcription in late G1.</text>
</comment>
<comment type="PTM">
    <text>Ubiquitinated by the E3 ubiquitin ligase complex SCF(CDC4), DIA2, and TOM1; and targeted to the 26S proteasome for degradation.</text>
</comment>
<comment type="PTM">
    <text evidence="3 4">Phosphorylated by CDC28. Phosphorylation is a prerequisite to ubiquitination and degradation.</text>
</comment>
<comment type="similarity">
    <text evidence="15">Belongs to the CDC6/cdc18 family.</text>
</comment>
<evidence type="ECO:0000255" key="1"/>
<evidence type="ECO:0000269" key="2">
    <source>
    </source>
</evidence>
<evidence type="ECO:0000269" key="3">
    <source>
    </source>
</evidence>
<evidence type="ECO:0000269" key="4">
    <source>
    </source>
</evidence>
<evidence type="ECO:0000269" key="5">
    <source>
    </source>
</evidence>
<evidence type="ECO:0000269" key="6">
    <source>
    </source>
</evidence>
<evidence type="ECO:0000269" key="7">
    <source>
    </source>
</evidence>
<evidence type="ECO:0000269" key="8">
    <source>
    </source>
</evidence>
<evidence type="ECO:0000269" key="9">
    <source>
    </source>
</evidence>
<evidence type="ECO:0000269" key="10">
    <source>
    </source>
</evidence>
<evidence type="ECO:0000269" key="11">
    <source>
    </source>
</evidence>
<evidence type="ECO:0000269" key="12">
    <source>
    </source>
</evidence>
<evidence type="ECO:0000269" key="13">
    <source>
    </source>
</evidence>
<evidence type="ECO:0000269" key="14">
    <source>
    </source>
</evidence>
<evidence type="ECO:0000305" key="15"/>
<evidence type="ECO:0007744" key="16">
    <source>
    </source>
</evidence>
<evidence type="ECO:0007829" key="17">
    <source>
        <dbReference type="PDB" id="7TJH"/>
    </source>
</evidence>
<evidence type="ECO:0007829" key="18">
    <source>
        <dbReference type="PDB" id="7TJI"/>
    </source>
</evidence>
<evidence type="ECO:0007829" key="19">
    <source>
        <dbReference type="PDB" id="7TJJ"/>
    </source>
</evidence>
<evidence type="ECO:0007829" key="20">
    <source>
        <dbReference type="PDB" id="7TJK"/>
    </source>
</evidence>
<keyword id="KW-0002">3D-structure</keyword>
<keyword id="KW-0067">ATP-binding</keyword>
<keyword id="KW-0131">Cell cycle</keyword>
<keyword id="KW-0132">Cell division</keyword>
<keyword id="KW-0158">Chromosome</keyword>
<keyword id="KW-0235">DNA replication</keyword>
<keyword id="KW-0547">Nucleotide-binding</keyword>
<keyword id="KW-0539">Nucleus</keyword>
<keyword id="KW-0597">Phosphoprotein</keyword>
<keyword id="KW-1185">Reference proteome</keyword>
<keyword id="KW-0832">Ubl conjugation</keyword>
<name>CDC6_YEAST</name>
<dbReference type="EMBL" id="J04734">
    <property type="protein sequence ID" value="AAA34484.1"/>
    <property type="molecule type" value="Genomic_DNA"/>
</dbReference>
<dbReference type="EMBL" id="M22858">
    <property type="protein sequence ID" value="AAA34483.1"/>
    <property type="molecule type" value="Genomic_DNA"/>
</dbReference>
<dbReference type="EMBL" id="X65299">
    <property type="protein sequence ID" value="CAA46392.1"/>
    <property type="molecule type" value="Genomic_DNA"/>
</dbReference>
<dbReference type="EMBL" id="X77688">
    <property type="protein sequence ID" value="CAA54766.1"/>
    <property type="molecule type" value="Genomic_DNA"/>
</dbReference>
<dbReference type="EMBL" id="Z49470">
    <property type="protein sequence ID" value="CAA89490.1"/>
    <property type="molecule type" value="Genomic_DNA"/>
</dbReference>
<dbReference type="EMBL" id="M61183">
    <property type="protein sequence ID" value="AAA34488.1"/>
    <property type="molecule type" value="Genomic_DNA"/>
</dbReference>
<dbReference type="EMBL" id="X13118">
    <property type="protein sequence ID" value="CAA31510.1"/>
    <property type="molecule type" value="Genomic_DNA"/>
</dbReference>
<dbReference type="EMBL" id="BK006943">
    <property type="protein sequence ID" value="DAA08613.1"/>
    <property type="molecule type" value="Genomic_DNA"/>
</dbReference>
<dbReference type="PIR" id="S46640">
    <property type="entry name" value="RGBYC6"/>
</dbReference>
<dbReference type="RefSeq" id="NP_012341.1">
    <property type="nucleotide sequence ID" value="NM_001181627.1"/>
</dbReference>
<dbReference type="PDB" id="5V8F">
    <property type="method" value="EM"/>
    <property type="resolution" value="3.90 A"/>
    <property type="chains" value="9=1-513"/>
</dbReference>
<dbReference type="PDB" id="6WGC">
    <property type="method" value="EM"/>
    <property type="resolution" value="4.30 A"/>
    <property type="chains" value="9=1-513"/>
</dbReference>
<dbReference type="PDB" id="6WGG">
    <property type="method" value="EM"/>
    <property type="resolution" value="8.10 A"/>
    <property type="chains" value="9=1-513"/>
</dbReference>
<dbReference type="PDB" id="6WGI">
    <property type="method" value="EM"/>
    <property type="resolution" value="10.00 A"/>
    <property type="chains" value="9=1-513"/>
</dbReference>
<dbReference type="PDB" id="7MCA">
    <property type="method" value="EM"/>
    <property type="resolution" value="3.60 A"/>
    <property type="chains" value="I=1-513"/>
</dbReference>
<dbReference type="PDB" id="7TJH">
    <property type="method" value="EM"/>
    <property type="resolution" value="2.50 A"/>
    <property type="chains" value="I=1-513"/>
</dbReference>
<dbReference type="PDB" id="7TJI">
    <property type="method" value="EM"/>
    <property type="resolution" value="2.70 A"/>
    <property type="chains" value="I=1-513"/>
</dbReference>
<dbReference type="PDB" id="7TJJ">
    <property type="method" value="EM"/>
    <property type="resolution" value="2.70 A"/>
    <property type="chains" value="I=1-513"/>
</dbReference>
<dbReference type="PDB" id="7TJK">
    <property type="method" value="EM"/>
    <property type="resolution" value="2.70 A"/>
    <property type="chains" value="I=1-513"/>
</dbReference>
<dbReference type="PDB" id="9BCX">
    <property type="method" value="EM"/>
    <property type="resolution" value="6.10 A"/>
    <property type="chains" value="I=1-513"/>
</dbReference>
<dbReference type="PDBsum" id="5V8F"/>
<dbReference type="PDBsum" id="6WGC"/>
<dbReference type="PDBsum" id="6WGG"/>
<dbReference type="PDBsum" id="6WGI"/>
<dbReference type="PDBsum" id="7MCA"/>
<dbReference type="PDBsum" id="7TJH"/>
<dbReference type="PDBsum" id="7TJI"/>
<dbReference type="PDBsum" id="7TJJ"/>
<dbReference type="PDBsum" id="7TJK"/>
<dbReference type="PDBsum" id="9BCX"/>
<dbReference type="EMDB" id="EMD-21662"/>
<dbReference type="EMDB" id="EMD-21665"/>
<dbReference type="EMDB" id="EMD-21666"/>
<dbReference type="EMDB" id="EMD-23755"/>
<dbReference type="EMDB" id="EMD-23818"/>
<dbReference type="EMDB" id="EMD-25925"/>
<dbReference type="EMDB" id="EMD-25926"/>
<dbReference type="EMDB" id="EMD-25927"/>
<dbReference type="EMDB" id="EMD-25928"/>
<dbReference type="EMDB" id="EMD-44441"/>
<dbReference type="EMDB" id="EMD-8540"/>
<dbReference type="SMR" id="P09119"/>
<dbReference type="BioGRID" id="33569">
    <property type="interactions" value="329"/>
</dbReference>
<dbReference type="DIP" id="DIP-2267N"/>
<dbReference type="ELM" id="P09119"/>
<dbReference type="FunCoup" id="P09119">
    <property type="interactions" value="1407"/>
</dbReference>
<dbReference type="IntAct" id="P09119">
    <property type="interactions" value="24"/>
</dbReference>
<dbReference type="MINT" id="P09119"/>
<dbReference type="STRING" id="4932.YJL194W"/>
<dbReference type="GlyGen" id="P09119">
    <property type="glycosylation" value="1 site"/>
</dbReference>
<dbReference type="iPTMnet" id="P09119"/>
<dbReference type="PaxDb" id="4932-YJL194W"/>
<dbReference type="PeptideAtlas" id="P09119"/>
<dbReference type="EnsemblFungi" id="YJL194W_mRNA">
    <property type="protein sequence ID" value="YJL194W"/>
    <property type="gene ID" value="YJL194W"/>
</dbReference>
<dbReference type="GeneID" id="853244"/>
<dbReference type="KEGG" id="sce:YJL194W"/>
<dbReference type="AGR" id="SGD:S000003730"/>
<dbReference type="SGD" id="S000003730">
    <property type="gene designation" value="CDC6"/>
</dbReference>
<dbReference type="VEuPathDB" id="FungiDB:YJL194W"/>
<dbReference type="eggNOG" id="KOG2227">
    <property type="taxonomic scope" value="Eukaryota"/>
</dbReference>
<dbReference type="GeneTree" id="ENSGT00530000063498"/>
<dbReference type="HOGENOM" id="CLU_012774_2_1_1"/>
<dbReference type="InParanoid" id="P09119"/>
<dbReference type="OMA" id="WPTDEVY"/>
<dbReference type="OrthoDB" id="1926878at2759"/>
<dbReference type="BioCyc" id="YEAST:G3O-31626-MONOMER"/>
<dbReference type="Reactome" id="R-SCE-176187">
    <property type="pathway name" value="Activation of ATR in response to replication stress"/>
</dbReference>
<dbReference type="Reactome" id="R-SCE-68689">
    <property type="pathway name" value="CDC6 association with the ORC:origin complex"/>
</dbReference>
<dbReference type="Reactome" id="R-SCE-68962">
    <property type="pathway name" value="Activation of the pre-replicative complex"/>
</dbReference>
<dbReference type="Reactome" id="R-SCE-69017">
    <property type="pathway name" value="CDK-mediated phosphorylation and removal of Cdc6"/>
</dbReference>
<dbReference type="BioGRID-ORCS" id="853244">
    <property type="hits" value="5 hits in 10 CRISPR screens"/>
</dbReference>
<dbReference type="PRO" id="PR:P09119"/>
<dbReference type="Proteomes" id="UP000002311">
    <property type="component" value="Chromosome X"/>
</dbReference>
<dbReference type="RNAct" id="P09119">
    <property type="molecule type" value="protein"/>
</dbReference>
<dbReference type="GO" id="GO:0005694">
    <property type="term" value="C:chromosome"/>
    <property type="evidence" value="ECO:0007669"/>
    <property type="project" value="UniProtKB-SubCell"/>
</dbReference>
<dbReference type="GO" id="GO:0005737">
    <property type="term" value="C:cytoplasm"/>
    <property type="evidence" value="ECO:0007005"/>
    <property type="project" value="SGD"/>
</dbReference>
<dbReference type="GO" id="GO:0031261">
    <property type="term" value="C:DNA replication preinitiation complex"/>
    <property type="evidence" value="ECO:0000314"/>
    <property type="project" value="SGD"/>
</dbReference>
<dbReference type="GO" id="GO:0005656">
    <property type="term" value="C:nuclear pre-replicative complex"/>
    <property type="evidence" value="ECO:0000314"/>
    <property type="project" value="SGD"/>
</dbReference>
<dbReference type="GO" id="GO:0005654">
    <property type="term" value="C:nucleoplasm"/>
    <property type="evidence" value="ECO:0000304"/>
    <property type="project" value="Reactome"/>
</dbReference>
<dbReference type="GO" id="GO:0005634">
    <property type="term" value="C:nucleus"/>
    <property type="evidence" value="ECO:0007005"/>
    <property type="project" value="SGD"/>
</dbReference>
<dbReference type="GO" id="GO:0005524">
    <property type="term" value="F:ATP binding"/>
    <property type="evidence" value="ECO:0000314"/>
    <property type="project" value="SGD"/>
</dbReference>
<dbReference type="GO" id="GO:0016887">
    <property type="term" value="F:ATP hydrolysis activity"/>
    <property type="evidence" value="ECO:0000314"/>
    <property type="project" value="SGD"/>
</dbReference>
<dbReference type="GO" id="GO:0003682">
    <property type="term" value="F:chromatin binding"/>
    <property type="evidence" value="ECO:0000314"/>
    <property type="project" value="SGD"/>
</dbReference>
<dbReference type="GO" id="GO:0004861">
    <property type="term" value="F:cyclin-dependent protein serine/threonine kinase inhibitor activity"/>
    <property type="evidence" value="ECO:0000314"/>
    <property type="project" value="SGD"/>
</dbReference>
<dbReference type="GO" id="GO:0003688">
    <property type="term" value="F:DNA replication origin binding"/>
    <property type="evidence" value="ECO:0000314"/>
    <property type="project" value="SGD"/>
</dbReference>
<dbReference type="GO" id="GO:0005525">
    <property type="term" value="F:GTP binding"/>
    <property type="evidence" value="ECO:0000314"/>
    <property type="project" value="SGD"/>
</dbReference>
<dbReference type="GO" id="GO:0003924">
    <property type="term" value="F:GTPase activity"/>
    <property type="evidence" value="ECO:0000314"/>
    <property type="project" value="SGD"/>
</dbReference>
<dbReference type="GO" id="GO:0051301">
    <property type="term" value="P:cell division"/>
    <property type="evidence" value="ECO:0007669"/>
    <property type="project" value="UniProtKB-KW"/>
</dbReference>
<dbReference type="GO" id="GO:0006270">
    <property type="term" value="P:DNA replication initiation"/>
    <property type="evidence" value="ECO:0000318"/>
    <property type="project" value="GO_Central"/>
</dbReference>
<dbReference type="GO" id="GO:0000082">
    <property type="term" value="P:G1/S transition of mitotic cell cycle"/>
    <property type="evidence" value="ECO:0000315"/>
    <property type="project" value="SGD"/>
</dbReference>
<dbReference type="GO" id="GO:0140530">
    <property type="term" value="P:MCM complex loading"/>
    <property type="evidence" value="ECO:0000315"/>
    <property type="project" value="SGD"/>
</dbReference>
<dbReference type="GO" id="GO:0033314">
    <property type="term" value="P:mitotic DNA replication checkpoint signaling"/>
    <property type="evidence" value="ECO:0000318"/>
    <property type="project" value="GO_Central"/>
</dbReference>
<dbReference type="GO" id="GO:0006267">
    <property type="term" value="P:pre-replicative complex assembly involved in nuclear cell cycle DNA replication"/>
    <property type="evidence" value="ECO:0000314"/>
    <property type="project" value="SGD"/>
</dbReference>
<dbReference type="GO" id="GO:0030174">
    <property type="term" value="P:regulation of DNA-templated DNA replication initiation"/>
    <property type="evidence" value="ECO:0000315"/>
    <property type="project" value="SGD"/>
</dbReference>
<dbReference type="FunFam" id="1.10.10.10:FF:000816">
    <property type="entry name" value="Cell division control protein"/>
    <property type="match status" value="1"/>
</dbReference>
<dbReference type="FunFam" id="1.10.8.60:FF:000186">
    <property type="entry name" value="Cell division control protein"/>
    <property type="match status" value="1"/>
</dbReference>
<dbReference type="Gene3D" id="1.10.8.60">
    <property type="match status" value="1"/>
</dbReference>
<dbReference type="Gene3D" id="3.40.50.300">
    <property type="entry name" value="P-loop containing nucleotide triphosphate hydrolases"/>
    <property type="match status" value="1"/>
</dbReference>
<dbReference type="Gene3D" id="1.10.10.10">
    <property type="entry name" value="Winged helix-like DNA-binding domain superfamily/Winged helix DNA-binding domain"/>
    <property type="match status" value="1"/>
</dbReference>
<dbReference type="InterPro" id="IPR003593">
    <property type="entry name" value="AAA+_ATPase"/>
</dbReference>
<dbReference type="InterPro" id="IPR049945">
    <property type="entry name" value="AAA_22"/>
</dbReference>
<dbReference type="InterPro" id="IPR016314">
    <property type="entry name" value="Cdc6/18"/>
</dbReference>
<dbReference type="InterPro" id="IPR015163">
    <property type="entry name" value="Cdc6_C"/>
</dbReference>
<dbReference type="InterPro" id="IPR054425">
    <property type="entry name" value="Cdc6_ORC1-like_ATPase_lid"/>
</dbReference>
<dbReference type="InterPro" id="IPR050311">
    <property type="entry name" value="ORC1/CDC6"/>
</dbReference>
<dbReference type="InterPro" id="IPR027417">
    <property type="entry name" value="P-loop_NTPase"/>
</dbReference>
<dbReference type="InterPro" id="IPR036388">
    <property type="entry name" value="WH-like_DNA-bd_sf"/>
</dbReference>
<dbReference type="InterPro" id="IPR036390">
    <property type="entry name" value="WH_DNA-bd_sf"/>
</dbReference>
<dbReference type="PANTHER" id="PTHR10763:SF26">
    <property type="entry name" value="CELL DIVISION CONTROL PROTEIN 6 HOMOLOG"/>
    <property type="match status" value="1"/>
</dbReference>
<dbReference type="PANTHER" id="PTHR10763">
    <property type="entry name" value="CELL DIVISION CONTROL PROTEIN 6-RELATED"/>
    <property type="match status" value="1"/>
</dbReference>
<dbReference type="Pfam" id="PF13401">
    <property type="entry name" value="AAA_22"/>
    <property type="match status" value="1"/>
</dbReference>
<dbReference type="Pfam" id="PF22606">
    <property type="entry name" value="Cdc6-ORC-like_ATPase_lid"/>
    <property type="match status" value="1"/>
</dbReference>
<dbReference type="Pfam" id="PF09079">
    <property type="entry name" value="Cdc6_C"/>
    <property type="match status" value="1"/>
</dbReference>
<dbReference type="PIRSF" id="PIRSF001767">
    <property type="entry name" value="Cdc6"/>
    <property type="match status" value="1"/>
</dbReference>
<dbReference type="SMART" id="SM00382">
    <property type="entry name" value="AAA"/>
    <property type="match status" value="1"/>
</dbReference>
<dbReference type="SUPFAM" id="SSF52540">
    <property type="entry name" value="P-loop containing nucleoside triphosphate hydrolases"/>
    <property type="match status" value="1"/>
</dbReference>
<dbReference type="SUPFAM" id="SSF46785">
    <property type="entry name" value="Winged helix' DNA-binding domain"/>
    <property type="match status" value="1"/>
</dbReference>
<sequence length="513" mass="58037">MSAIPITPTKRIRRNLFDDAPATPPRPLKRKKLQFTDVTPESSPEKLQFGSQSIFLRTKALLQKSSELVNLNSSDGALPARTAEYEQVMNFLAKAISEHRSDSLYITGPPGTGKTAQLDMIIRQKFQSLPLSLSTPRSKDVLRHTNPNLQNLSWFELPDGRLESVAVTSINCISLGEPSSIFQKIFDSFQDLNGPTLQIKNMQHLQKFLEPYHKKTTFVVVLDEMDRLLHANTSETQSVRTILELFLLAKLPTVSFVLIGMANSLDMKDRFLSRLNLDRGLLPQTIVFQPYTAEQMYEIVIQKMSSLPTIIFQPMAIKFAAKKCAGNTGDLRKLFDVLRGSIEIYELEKRFLLSPTRGSLNSAQVPLTPTTSPVKKSYPEPQGKIGLNYIAKVFSKFVNNNSTRTRIAKLNIQQKLILCTIIQSLKLNSDATIDESFDHYIKAITKTDTLAPLQRNEFLEICTILETCGLVSIKKTKCKGKTKRFVDKIDVDLDMREFYDEMTKISILKPFLH</sequence>
<accession>P09119</accession>
<accession>D6VVZ7</accession>
<protein>
    <recommendedName>
        <fullName>Cell division control protein 6</fullName>
    </recommendedName>
</protein>
<reference key="1">
    <citation type="journal article" date="1989" name="J. Biol. Chem.">
        <title>Molecular cloning of Saccharomyces cerevisiae CDC6 gene. Isolation, identification, and sequence analysis.</title>
        <authorList>
            <person name="Zhou C."/>
            <person name="Huang S.H."/>
            <person name="Jong A.Y."/>
        </authorList>
    </citation>
    <scope>NUCLEOTIDE SEQUENCE [GENOMIC DNA]</scope>
</reference>
<reference key="2">
    <citation type="submission" date="1990-04" db="EMBL/GenBank/DDBJ databases">
        <title>Molecular cloning and characterization of the cell division cycle gene CDC6 from Saccharomyces cerevisiae.</title>
        <authorList>
            <person name="Colasanti J.J."/>
            <person name="Comer A.R."/>
            <person name="Bruschi C.V."/>
        </authorList>
    </citation>
    <scope>NUCLEOTIDE SEQUENCE [GENOMIC DNA]</scope>
</reference>
<reference key="3">
    <citation type="journal article" date="1992" name="EMBO J.">
        <title>Dual functions of CDC6: a yeast protein required for DNA replication also inhibits nuclear division.</title>
        <authorList>
            <person name="Bueno A."/>
            <person name="Russell P."/>
        </authorList>
    </citation>
    <scope>NUCLEOTIDE SEQUENCE [GENOMIC DNA]</scope>
    <scope>FUNCTION</scope>
</reference>
<reference key="4">
    <citation type="journal article" date="1994" name="Yeast">
        <title>The sequence of a 36 kb segment on the left arm of yeast chromosome X identifies 24 open reading frames including NUC1, PRP21 (SPP91), CDC6, CRY2, the gene for S24, a homologue to the aconitase gene ACO1 and two homologues to chromosome III genes.</title>
        <authorList>
            <person name="Purnelle B."/>
            <person name="Coster F."/>
            <person name="Goffeau A."/>
        </authorList>
    </citation>
    <scope>NUCLEOTIDE SEQUENCE [GENOMIC DNA]</scope>
    <source>
        <strain>ATCC 204508 / S288c</strain>
    </source>
</reference>
<reference key="5">
    <citation type="journal article" date="1996" name="EMBO J.">
        <title>Complete nucleotide sequence of Saccharomyces cerevisiae chromosome X.</title>
        <authorList>
            <person name="Galibert F."/>
            <person name="Alexandraki D."/>
            <person name="Baur A."/>
            <person name="Boles E."/>
            <person name="Chalwatzis N."/>
            <person name="Chuat J.-C."/>
            <person name="Coster F."/>
            <person name="Cziepluch C."/>
            <person name="de Haan M."/>
            <person name="Domdey H."/>
            <person name="Durand P."/>
            <person name="Entian K.-D."/>
            <person name="Gatius M."/>
            <person name="Goffeau A."/>
            <person name="Grivell L.A."/>
            <person name="Hennemann A."/>
            <person name="Herbert C.J."/>
            <person name="Heumann K."/>
            <person name="Hilger F."/>
            <person name="Hollenberg C.P."/>
            <person name="Huang M.-E."/>
            <person name="Jacq C."/>
            <person name="Jauniaux J.-C."/>
            <person name="Katsoulou C."/>
            <person name="Kirchrath L."/>
            <person name="Kleine K."/>
            <person name="Kordes E."/>
            <person name="Koetter P."/>
            <person name="Liebl S."/>
            <person name="Louis E.J."/>
            <person name="Manus V."/>
            <person name="Mewes H.-W."/>
            <person name="Miosga T."/>
            <person name="Obermaier B."/>
            <person name="Perea J."/>
            <person name="Pohl T.M."/>
            <person name="Portetelle D."/>
            <person name="Pujol A."/>
            <person name="Purnelle B."/>
            <person name="Ramezani Rad M."/>
            <person name="Rasmussen S.W."/>
            <person name="Rose M."/>
            <person name="Rossau R."/>
            <person name="Schaaff-Gerstenschlaeger I."/>
            <person name="Smits P.H.M."/>
            <person name="Scarcez T."/>
            <person name="Soriano N."/>
            <person name="To Van D."/>
            <person name="Tzermia M."/>
            <person name="Van Broekhoven A."/>
            <person name="Vandenbol M."/>
            <person name="Wedler H."/>
            <person name="von Wettstein D."/>
            <person name="Wambutt R."/>
            <person name="Zagulski M."/>
            <person name="Zollner A."/>
            <person name="Karpfinger-Hartl L."/>
        </authorList>
    </citation>
    <scope>NUCLEOTIDE SEQUENCE [LARGE SCALE GENOMIC DNA]</scope>
    <source>
        <strain>ATCC 204508 / S288c</strain>
    </source>
</reference>
<reference key="6">
    <citation type="journal article" date="2014" name="G3 (Bethesda)">
        <title>The reference genome sequence of Saccharomyces cerevisiae: Then and now.</title>
        <authorList>
            <person name="Engel S.R."/>
            <person name="Dietrich F.S."/>
            <person name="Fisk D.G."/>
            <person name="Binkley G."/>
            <person name="Balakrishnan R."/>
            <person name="Costanzo M.C."/>
            <person name="Dwight S.S."/>
            <person name="Hitz B.C."/>
            <person name="Karra K."/>
            <person name="Nash R.S."/>
            <person name="Weng S."/>
            <person name="Wong E.D."/>
            <person name="Lloyd P."/>
            <person name="Skrzypek M.S."/>
            <person name="Miyasato S.R."/>
            <person name="Simison M."/>
            <person name="Cherry J.M."/>
        </authorList>
    </citation>
    <scope>GENOME REANNOTATION</scope>
    <source>
        <strain>ATCC 204508 / S288c</strain>
    </source>
</reference>
<reference key="7">
    <citation type="journal article" date="1990" name="J. Biol. Chem.">
        <title>CDC6 mRNA fluctuates periodically in the yeast cell cycle.</title>
        <authorList>
            <person name="Zhou C."/>
            <person name="Jong A.Y."/>
        </authorList>
    </citation>
    <scope>NUCLEOTIDE SEQUENCE [GENOMIC DNA] OF 1-48</scope>
</reference>
<reference key="8">
    <citation type="journal article" date="1988" name="Nucleic Acids Res.">
        <title>Cloning and characterization of the Saccharomyces cerevisiae CDC6 gene.</title>
        <authorList>
            <person name="Lisziewicz J."/>
            <person name="Godany A."/>
            <person name="Agoston D.V."/>
            <person name="Kuentzel H."/>
        </authorList>
    </citation>
    <scope>NUCLEOTIDE SEQUENCE [GENOMIC DNA] OF 89-513</scope>
</reference>
<reference key="9">
    <citation type="journal article" date="1995" name="EMBO J.">
        <title>Cdc6 is an unstable protein whose de novo synthesis in G1 is important for the onset of S phase and for preventing a 'reductional' anaphase in the budding yeast Saccharomyces cerevisiae.</title>
        <authorList>
            <person name="Piatti S."/>
            <person name="Lengauer C."/>
            <person name="Nasmyth K."/>
        </authorList>
    </citation>
    <scope>INDUCTION</scope>
    <scope>FUNCTION</scope>
</reference>
<reference key="10">
    <citation type="journal article" date="1996" name="DNA Cell Biol.">
        <title>Intracellular location of the Saccharomyces cerevisiae CDC6 gene product.</title>
        <authorList>
            <person name="Jong A."/>
            <person name="Young M."/>
            <person name="Chen G.C."/>
            <person name="Zhang S.Q."/>
            <person name="Chan C."/>
        </authorList>
    </citation>
    <scope>SUBCELLULAR LOCATION</scope>
    <scope>MUTAGENESIS OF LYS-29</scope>
    <scope>NUCLEAR LOCALIZATION SIGNAL</scope>
</reference>
<reference key="11">
    <citation type="journal article" date="1996" name="EMBO J.">
        <title>ORC- and Cdc6-dependent complexes at active and inactive chromosomal replication origins in Saccharomyces cerevisiae.</title>
        <authorList>
            <person name="Santocanale C."/>
            <person name="Diffley J.F."/>
        </authorList>
    </citation>
    <scope>FUNCTION</scope>
</reference>
<reference key="12">
    <citation type="journal article" date="1996" name="Nature">
        <title>An essential role for the Cdc6 protein in forming the pre-replicative complexes of budding yeast.</title>
        <authorList>
            <person name="Cocker J.H."/>
            <person name="Piatti S."/>
            <person name="Santocanale C."/>
            <person name="Nasmyth K."/>
            <person name="Diffley J.F."/>
        </authorList>
    </citation>
    <scope>INDUCTION</scope>
    <scope>FUNCTION</scope>
</reference>
<reference key="13">
    <citation type="journal article" date="1997" name="EMBO J.">
        <title>The Cdc4/34/53 pathway targets Cdc6p for proteolysis in budding yeast.</title>
        <authorList>
            <person name="Drury L.S."/>
            <person name="Perkins G."/>
            <person name="Diffley J.F."/>
        </authorList>
    </citation>
    <scope>FUNCTION</scope>
    <scope>INTERACTION WITH CDC4</scope>
</reference>
<reference key="14">
    <citation type="journal article" date="1997" name="J. Cell Sci.">
        <title>Cdc6p establishes and maintains a state of replication competence during G1 phase.</title>
        <authorList>
            <person name="Detweiler C.S."/>
            <person name="Li J.J."/>
        </authorList>
    </citation>
    <scope>FUNCTION</scope>
</reference>
<reference key="15">
    <citation type="journal article" date="1999" name="J. Biol. Chem.">
        <title>The essential role of Saccharomyces cerevisiae CDC6 nucleotide-binding site in cell growth, DNA synthesis, and Orc1 association.</title>
        <authorList>
            <person name="Wang B."/>
            <person name="Feng L."/>
            <person name="Hu Y."/>
            <person name="Huang S.H."/>
            <person name="Reynolds C.P."/>
            <person name="Wu L."/>
            <person name="Jong A.Y."/>
        </authorList>
    </citation>
    <scope>INTERACTION WITH ORC1</scope>
    <scope>MUTAGENESIS OF LYS-114</scope>
    <scope>FUNCTION</scope>
    <scope>SUBCELLULAR LOCATION</scope>
</reference>
<reference key="16">
    <citation type="journal article" date="1999" name="Mol. Biol. Cell">
        <title>Phosphorylation controls timing of Cdc6p destruction: A biochemical analysis.</title>
        <authorList>
            <person name="Elsasser S."/>
            <person name="Chi Y."/>
            <person name="Yang P."/>
            <person name="Campbell J.L."/>
        </authorList>
    </citation>
    <scope>INTERACTION WITH CDC28</scope>
    <scope>PHOSPHORYLATION BY CDC28</scope>
    <scope>UBIQUITINATION</scope>
</reference>
<reference key="17">
    <citation type="journal article" date="1999" name="Proc. Natl. Acad. Sci. U.S.A.">
        <title>The Cdc6p nucleotide-binding motif is required for loading mcm proteins onto chromatin.</title>
        <authorList>
            <person name="Weinreich M."/>
            <person name="Liang C."/>
            <person name="Stillman B."/>
        </authorList>
    </citation>
    <scope>MUTAGENESIS OF LYS-114</scope>
    <scope>FUNCTION</scope>
</reference>
<reference key="18">
    <citation type="journal article" date="2000" name="J. Biol. Chem.">
        <title>The stability of the Cdc6 protein is regulated by cyclin-dependent kinase/cyclin B complexes in Saccharomyces cerevisiae.</title>
        <authorList>
            <person name="Calzada A."/>
            <person name="Sanchez M."/>
            <person name="Sanchez E."/>
            <person name="Bueno A."/>
        </authorList>
    </citation>
    <scope>INTERACTION WITH CDC28</scope>
    <scope>PHOSPHORYLATION BY CDC28</scope>
</reference>
<reference key="19">
    <citation type="journal article" date="2009" name="Science">
        <title>Global analysis of Cdk1 substrate phosphorylation sites provides insights into evolution.</title>
        <authorList>
            <person name="Holt L.J."/>
            <person name="Tuch B.B."/>
            <person name="Villen J."/>
            <person name="Johnson A.D."/>
            <person name="Gygi S.P."/>
            <person name="Morgan D.O."/>
        </authorList>
    </citation>
    <scope>PHOSPHORYLATION [LARGE SCALE ANALYSIS] AT THR-368</scope>
    <scope>IDENTIFICATION BY MASS SPECTROMETRY [LARGE SCALE ANALYSIS]</scope>
</reference>
<reference key="20">
    <citation type="journal article" date="2012" name="J. Biol. Chem.">
        <title>The Hect domain E3 ligase Tom1 and the F-box protein Dia2 control Cdc6 degradation in G1 phase.</title>
        <authorList>
            <person name="Kim D.H."/>
            <person name="Zhang W."/>
            <person name="Koepp D.M."/>
        </authorList>
    </citation>
    <scope>INTERACTION WITH DIA2 AND TOM1</scope>
    <scope>UBIQUITINATION</scope>
    <scope>SUBCELLULAR LOCATION</scope>
</reference>
<reference key="21">
    <citation type="journal article" date="2013" name="Mol. Cell">
        <title>An ORC/Cdc6/MCM2-7 complex is formed in a multistep reaction to serve as a platform for MCM double-hexamer assembly.</title>
        <authorList>
            <person name="Fernandez-Cid A."/>
            <person name="Riera A."/>
            <person name="Tognetti S."/>
            <person name="Herrera M.C."/>
            <person name="Samel S."/>
            <person name="Evrin C."/>
            <person name="Winkler C."/>
            <person name="Gardenal E."/>
            <person name="Uhle S."/>
            <person name="Speck C."/>
        </authorList>
    </citation>
    <scope>INTERACTION WITH THE ORC AND MCM2-7 COMPLEXES</scope>
    <scope>FUNCTION</scope>
</reference>
<gene>
    <name type="primary">CDC6</name>
    <name type="ordered locus">YJL194W</name>
    <name type="ORF">J0347</name>
</gene>